<name>HELI_HCMVM</name>
<evidence type="ECO:0000255" key="1">
    <source>
        <dbReference type="HAMAP-Rule" id="MF_04030"/>
    </source>
</evidence>
<evidence type="ECO:0000256" key="2">
    <source>
        <dbReference type="SAM" id="MobiDB-lite"/>
    </source>
</evidence>
<gene>
    <name evidence="1" type="primary">HELI</name>
    <name type="ordered locus">UL105</name>
</gene>
<keyword id="KW-0067">ATP-binding</keyword>
<keyword id="KW-0235">DNA replication</keyword>
<keyword id="KW-0347">Helicase</keyword>
<keyword id="KW-1048">Host nucleus</keyword>
<keyword id="KW-0378">Hydrolase</keyword>
<keyword id="KW-0547">Nucleotide-binding</keyword>
<keyword id="KW-1185">Reference proteome</keyword>
<organism>
    <name type="scientific">Human cytomegalovirus (strain Merlin)</name>
    <name type="common">HHV-5</name>
    <name type="synonym">Human herpesvirus 5</name>
    <dbReference type="NCBI Taxonomy" id="295027"/>
    <lineage>
        <taxon>Viruses</taxon>
        <taxon>Duplodnaviria</taxon>
        <taxon>Heunggongvirae</taxon>
        <taxon>Peploviricota</taxon>
        <taxon>Herviviricetes</taxon>
        <taxon>Herpesvirales</taxon>
        <taxon>Orthoherpesviridae</taxon>
        <taxon>Betaherpesvirinae</taxon>
        <taxon>Cytomegalovirus</taxon>
        <taxon>Cytomegalovirus humanbeta5</taxon>
        <taxon>Human cytomegalovirus</taxon>
    </lineage>
</organism>
<accession>F5HEN8</accession>
<comment type="function">
    <text evidence="1">Component of the helicase/primase complex. Unwinds the DNA at the replication forks and generates single-stranded DNA for both leading and lagging strand synthesis. The primase synthesizes short RNA primers on the lagging strand that the polymerase elongates using dNTPs. Possesses helicase-like motifs and therefore may act as the helicase subunit of the complex.</text>
</comment>
<comment type="subunit">
    <text evidence="1">Associates with the primase and the primase-associated factor to form the helicase-primase complex.</text>
</comment>
<comment type="subcellular location">
    <subcellularLocation>
        <location evidence="1">Host nucleus</location>
    </subcellularLocation>
</comment>
<comment type="similarity">
    <text evidence="1">Belongs to the herpesviridae helicase family.</text>
</comment>
<organismHost>
    <name type="scientific">Homo sapiens</name>
    <name type="common">Human</name>
    <dbReference type="NCBI Taxonomy" id="9606"/>
</organismHost>
<sequence>MSMTASSSTPRPTPKYDDALILNLSSAAKIERIVDKVKSLSRERFAPEDFSFQWFRSISRVERTTDNNPSAATTAAATATVHSSVSSSAAAAASSEAGGTRVPCVDRWPFFPFRALLVTGTAGAGKTSSIQVLAANLDCVITGTTVIAAQNLSAILNRTRSAQVKTIYRVFGFVSKHVPLADSAVSHETLERYRVCEPHEETTIQRLQINDLLAYWPVIADIVDKCLNMWERKAASASAAAAAAACEDLSELCESNIIVIDECGLMLRYMLQVVVFFYYFYNALGDTRLYRERRVPCIICVGSPTQTEALESRYDHYTQNKSVRKGVDVLSALIQNEVLINYCDIADNWVMFIHNKRCTDLDFGDLLKYMEFGIPLKEEHVAYVDRFVRPPSSIRNPSYAAEMTRLFLSHVEVQAYFKRLHEQIRLSERHRLFDLPVYCVVNNRAYQELCELADPLGDSPQPVELWFRQNLARIINYSQFVDHNLSSEITKEALRPAADVVATNNPSVQAHGGGGSVIGSTGGNDETAFFQDDDTTTAPDSRETLLTLRITYIKGSSVGVNSKVRACVIGYQGTVERFVDILQKDTFIERTPCEQAAYAYSLVSGLLFSAMYYFYVSPYTTEEMLRELARVELPDVSSLCAAAAATAAAPAWSGGENPINNHVDADSSQGGQSVPVSQRMEHGQEETHDIPCLSNHHDDSDAITDAELMDHTSLYADPFFLKYVKPPSLALLSFEETVHMYTTFRDIFLKRYQLMQRLTGGRFATLPLVTYNRRNVVFKANCQISSQTGSFVGMLSHVSPAQTYTLEGYTSDNVLSLPSDRHRIHPEVVQRGLSRLVLRDALGFLFVLDVNVSRFVESAQGKSLHVCTTVDYGLTSRTAMTIAKSQGLSLEKVAVDFGDHPKNLKMSHIYVAMSRVTDPEHLMMNVNPLRLPYEKNTAITPYICRALKDKRTTLIF</sequence>
<feature type="chain" id="PRO_0000418233" description="DNA replication helicase">
    <location>
        <begin position="1"/>
        <end position="956"/>
    </location>
</feature>
<feature type="region of interest" description="Disordered" evidence="2">
    <location>
        <begin position="658"/>
        <end position="694"/>
    </location>
</feature>
<feature type="compositionally biased region" description="Low complexity" evidence="2">
    <location>
        <begin position="667"/>
        <end position="678"/>
    </location>
</feature>
<feature type="compositionally biased region" description="Basic and acidic residues" evidence="2">
    <location>
        <begin position="679"/>
        <end position="694"/>
    </location>
</feature>
<feature type="binding site" evidence="1">
    <location>
        <begin position="120"/>
        <end position="127"/>
    </location>
    <ligand>
        <name>ATP</name>
        <dbReference type="ChEBI" id="CHEBI:30616"/>
    </ligand>
</feature>
<proteinExistence type="inferred from homology"/>
<dbReference type="EC" id="3.6.4.-" evidence="1"/>
<dbReference type="EMBL" id="AY446894">
    <property type="protein sequence ID" value="AAR31655.1"/>
    <property type="molecule type" value="Genomic_DNA"/>
</dbReference>
<dbReference type="RefSeq" id="YP_081551.1">
    <property type="nucleotide sequence ID" value="NC_006273.2"/>
</dbReference>
<dbReference type="GeneID" id="3077546"/>
<dbReference type="KEGG" id="vg:3077546"/>
<dbReference type="Reactome" id="R-HSA-9609690">
    <property type="pathway name" value="HCMV Early Events"/>
</dbReference>
<dbReference type="Reactome" id="R-HSA-9610379">
    <property type="pathway name" value="HCMV Late Events"/>
</dbReference>
<dbReference type="Proteomes" id="UP000000938">
    <property type="component" value="Segment"/>
</dbReference>
<dbReference type="GO" id="GO:0042025">
    <property type="term" value="C:host cell nucleus"/>
    <property type="evidence" value="ECO:0007669"/>
    <property type="project" value="UniProtKB-SubCell"/>
</dbReference>
<dbReference type="GO" id="GO:0005524">
    <property type="term" value="F:ATP binding"/>
    <property type="evidence" value="ECO:0007669"/>
    <property type="project" value="UniProtKB-KW"/>
</dbReference>
<dbReference type="GO" id="GO:0004386">
    <property type="term" value="F:helicase activity"/>
    <property type="evidence" value="ECO:0007669"/>
    <property type="project" value="UniProtKB-KW"/>
</dbReference>
<dbReference type="GO" id="GO:0016787">
    <property type="term" value="F:hydrolase activity"/>
    <property type="evidence" value="ECO:0007669"/>
    <property type="project" value="UniProtKB-KW"/>
</dbReference>
<dbReference type="GO" id="GO:0006260">
    <property type="term" value="P:DNA replication"/>
    <property type="evidence" value="ECO:0007669"/>
    <property type="project" value="UniProtKB-KW"/>
</dbReference>
<dbReference type="CDD" id="cd18809">
    <property type="entry name" value="SF1_C_RecD"/>
    <property type="match status" value="1"/>
</dbReference>
<dbReference type="Gene3D" id="3.40.50.300">
    <property type="entry name" value="P-loop containing nucleotide triphosphate hydrolases"/>
    <property type="match status" value="1"/>
</dbReference>
<dbReference type="HAMAP" id="MF_04030">
    <property type="entry name" value="HSV_HELI"/>
    <property type="match status" value="1"/>
</dbReference>
<dbReference type="InterPro" id="IPR003840">
    <property type="entry name" value="DNA_helicase_dom"/>
</dbReference>
<dbReference type="InterPro" id="IPR034711">
    <property type="entry name" value="HSV_HELI"/>
</dbReference>
<dbReference type="InterPro" id="IPR027417">
    <property type="entry name" value="P-loop_NTPase"/>
</dbReference>
<dbReference type="Pfam" id="PF02689">
    <property type="entry name" value="Herpes_Helicase"/>
    <property type="match status" value="1"/>
</dbReference>
<dbReference type="SUPFAM" id="SSF52540">
    <property type="entry name" value="P-loop containing nucleoside triphosphate hydrolases"/>
    <property type="match status" value="2"/>
</dbReference>
<reference key="1">
    <citation type="journal article" date="2004" name="J. Gen. Virol.">
        <title>Genetic content of wild-type human cytomegalovirus.</title>
        <authorList>
            <person name="Dolan A."/>
            <person name="Cunningham C."/>
            <person name="Hector R.D."/>
            <person name="Hassan-Walker A.F."/>
            <person name="Lee L."/>
            <person name="Addison C."/>
            <person name="Dargan D.J."/>
            <person name="McGeoch D.J."/>
            <person name="Gatherer D."/>
            <person name="Emery V.C."/>
            <person name="Griffiths P.D."/>
            <person name="Sinzger C."/>
            <person name="McSharry B.P."/>
            <person name="Wilkinson G.W.G."/>
            <person name="Davison A.J."/>
        </authorList>
    </citation>
    <scope>NUCLEOTIDE SEQUENCE [LARGE SCALE GENOMIC DNA]</scope>
</reference>
<protein>
    <recommendedName>
        <fullName evidence="1">DNA replication helicase</fullName>
        <ecNumber evidence="1">3.6.4.-</ecNumber>
    </recommendedName>
</protein>